<protein>
    <recommendedName>
        <fullName evidence="1">tRNA/tmRNA (uracil-C(5))-methyltransferase</fullName>
        <ecNumber evidence="1">2.1.1.-</ecNumber>
        <ecNumber evidence="1">2.1.1.35</ecNumber>
    </recommendedName>
    <alternativeName>
        <fullName evidence="1">tRNA (uracil(54)-C(5))-methyltransferase</fullName>
    </alternativeName>
    <alternativeName>
        <fullName evidence="1">tRNA(m5U54)-methyltransferase</fullName>
        <shortName evidence="1">RUMT</shortName>
    </alternativeName>
    <alternativeName>
        <fullName evidence="1">tmRNA (uracil(341)-C(5))-methyltransferase</fullName>
    </alternativeName>
</protein>
<organism>
    <name type="scientific">Chromohalobacter salexigens (strain ATCC BAA-138 / DSM 3043 / CIP 106854 / NCIMB 13768 / 1H11)</name>
    <dbReference type="NCBI Taxonomy" id="290398"/>
    <lineage>
        <taxon>Bacteria</taxon>
        <taxon>Pseudomonadati</taxon>
        <taxon>Pseudomonadota</taxon>
        <taxon>Gammaproteobacteria</taxon>
        <taxon>Oceanospirillales</taxon>
        <taxon>Halomonadaceae</taxon>
        <taxon>Chromohalobacter</taxon>
    </lineage>
</organism>
<dbReference type="EC" id="2.1.1.-" evidence="1"/>
<dbReference type="EC" id="2.1.1.35" evidence="1"/>
<dbReference type="EMBL" id="CP000285">
    <property type="protein sequence ID" value="ABE58694.1"/>
    <property type="status" value="ALT_INIT"/>
    <property type="molecule type" value="Genomic_DNA"/>
</dbReference>
<dbReference type="RefSeq" id="WP_043558109.1">
    <property type="nucleotide sequence ID" value="NC_007963.1"/>
</dbReference>
<dbReference type="SMR" id="Q1QXW4"/>
<dbReference type="STRING" id="290398.Csal_1339"/>
<dbReference type="GeneID" id="95334077"/>
<dbReference type="KEGG" id="csa:Csal_1339"/>
<dbReference type="eggNOG" id="COG2265">
    <property type="taxonomic scope" value="Bacteria"/>
</dbReference>
<dbReference type="HOGENOM" id="CLU_043022_0_0_6"/>
<dbReference type="OrthoDB" id="9804590at2"/>
<dbReference type="Proteomes" id="UP000000239">
    <property type="component" value="Chromosome"/>
</dbReference>
<dbReference type="GO" id="GO:0005829">
    <property type="term" value="C:cytosol"/>
    <property type="evidence" value="ECO:0007669"/>
    <property type="project" value="TreeGrafter"/>
</dbReference>
<dbReference type="GO" id="GO:0019843">
    <property type="term" value="F:rRNA binding"/>
    <property type="evidence" value="ECO:0007669"/>
    <property type="project" value="TreeGrafter"/>
</dbReference>
<dbReference type="GO" id="GO:0030697">
    <property type="term" value="F:tRNA (uracil(54)-C5)-methyltransferase activity, S-adenosyl methionine-dependent"/>
    <property type="evidence" value="ECO:0007669"/>
    <property type="project" value="UniProtKB-UniRule"/>
</dbReference>
<dbReference type="GO" id="GO:0000049">
    <property type="term" value="F:tRNA binding"/>
    <property type="evidence" value="ECO:0007669"/>
    <property type="project" value="TreeGrafter"/>
</dbReference>
<dbReference type="GO" id="GO:0030488">
    <property type="term" value="P:tRNA methylation"/>
    <property type="evidence" value="ECO:0007669"/>
    <property type="project" value="UniProtKB-UniRule"/>
</dbReference>
<dbReference type="FunFam" id="2.40.50.1070:FF:000001">
    <property type="entry name" value="tRNA/tmRNA (uracil-C(5))-methyltransferase"/>
    <property type="match status" value="1"/>
</dbReference>
<dbReference type="FunFam" id="3.40.50.150:FF:000012">
    <property type="entry name" value="tRNA/tmRNA (uracil-C(5))-methyltransferase"/>
    <property type="match status" value="1"/>
</dbReference>
<dbReference type="Gene3D" id="2.40.50.1070">
    <property type="match status" value="1"/>
</dbReference>
<dbReference type="Gene3D" id="3.40.50.150">
    <property type="entry name" value="Vaccinia Virus protein VP39"/>
    <property type="match status" value="1"/>
</dbReference>
<dbReference type="HAMAP" id="MF_01011">
    <property type="entry name" value="RNA_methyltr_TrmA"/>
    <property type="match status" value="1"/>
</dbReference>
<dbReference type="InterPro" id="IPR030390">
    <property type="entry name" value="MeTrfase_TrmA_AS"/>
</dbReference>
<dbReference type="InterPro" id="IPR029063">
    <property type="entry name" value="SAM-dependent_MTases_sf"/>
</dbReference>
<dbReference type="InterPro" id="IPR011869">
    <property type="entry name" value="TrmA_MeTrfase"/>
</dbReference>
<dbReference type="InterPro" id="IPR010280">
    <property type="entry name" value="U5_MeTrfase_fam"/>
</dbReference>
<dbReference type="NCBIfam" id="TIGR02143">
    <property type="entry name" value="trmA_only"/>
    <property type="match status" value="1"/>
</dbReference>
<dbReference type="PANTHER" id="PTHR47790">
    <property type="entry name" value="TRNA/TMRNA (URACIL-C(5))-METHYLTRANSFERASE"/>
    <property type="match status" value="1"/>
</dbReference>
<dbReference type="PANTHER" id="PTHR47790:SF2">
    <property type="entry name" value="TRNA_TMRNA (URACIL-C(5))-METHYLTRANSFERASE"/>
    <property type="match status" value="1"/>
</dbReference>
<dbReference type="Pfam" id="PF05958">
    <property type="entry name" value="tRNA_U5-meth_tr"/>
    <property type="match status" value="1"/>
</dbReference>
<dbReference type="SUPFAM" id="SSF53335">
    <property type="entry name" value="S-adenosyl-L-methionine-dependent methyltransferases"/>
    <property type="match status" value="1"/>
</dbReference>
<dbReference type="PROSITE" id="PS51687">
    <property type="entry name" value="SAM_MT_RNA_M5U"/>
    <property type="match status" value="1"/>
</dbReference>
<dbReference type="PROSITE" id="PS01230">
    <property type="entry name" value="TRMA_1"/>
    <property type="match status" value="1"/>
</dbReference>
<name>TRMA_CHRSD</name>
<evidence type="ECO:0000255" key="1">
    <source>
        <dbReference type="HAMAP-Rule" id="MF_01011"/>
    </source>
</evidence>
<evidence type="ECO:0000305" key="2"/>
<keyword id="KW-0489">Methyltransferase</keyword>
<keyword id="KW-1185">Reference proteome</keyword>
<keyword id="KW-0949">S-adenosyl-L-methionine</keyword>
<keyword id="KW-0808">Transferase</keyword>
<keyword id="KW-0819">tRNA processing</keyword>
<comment type="function">
    <text evidence="1">Dual-specificity methyltransferase that catalyzes the formation of 5-methyluridine at position 54 (m5U54) in all tRNAs, and that of position 341 (m5U341) in tmRNA (transfer-mRNA).</text>
</comment>
<comment type="catalytic activity">
    <reaction evidence="1">
        <text>uridine(54) in tRNA + S-adenosyl-L-methionine = 5-methyluridine(54) in tRNA + S-adenosyl-L-homocysteine + H(+)</text>
        <dbReference type="Rhea" id="RHEA:42712"/>
        <dbReference type="Rhea" id="RHEA-COMP:10167"/>
        <dbReference type="Rhea" id="RHEA-COMP:10193"/>
        <dbReference type="ChEBI" id="CHEBI:15378"/>
        <dbReference type="ChEBI" id="CHEBI:57856"/>
        <dbReference type="ChEBI" id="CHEBI:59789"/>
        <dbReference type="ChEBI" id="CHEBI:65315"/>
        <dbReference type="ChEBI" id="CHEBI:74447"/>
        <dbReference type="EC" id="2.1.1.35"/>
    </reaction>
</comment>
<comment type="catalytic activity">
    <reaction evidence="1">
        <text>uridine(341) in tmRNA + S-adenosyl-L-methionine = 5-methyluridine(341) in tmRNA + S-adenosyl-L-homocysteine + H(+)</text>
        <dbReference type="Rhea" id="RHEA:43612"/>
        <dbReference type="Rhea" id="RHEA-COMP:10630"/>
        <dbReference type="Rhea" id="RHEA-COMP:10631"/>
        <dbReference type="ChEBI" id="CHEBI:15378"/>
        <dbReference type="ChEBI" id="CHEBI:57856"/>
        <dbReference type="ChEBI" id="CHEBI:59789"/>
        <dbReference type="ChEBI" id="CHEBI:65315"/>
        <dbReference type="ChEBI" id="CHEBI:74447"/>
    </reaction>
</comment>
<comment type="similarity">
    <text evidence="1">Belongs to the class I-like SAM-binding methyltransferase superfamily. RNA M5U methyltransferase family. TrmA subfamily.</text>
</comment>
<comment type="sequence caution" evidence="2">
    <conflict type="erroneous initiation">
        <sequence resource="EMBL-CDS" id="ABE58694"/>
    </conflict>
    <text>Extended N-terminus.</text>
</comment>
<feature type="chain" id="PRO_0000281438" description="tRNA/tmRNA (uracil-C(5))-methyltransferase">
    <location>
        <begin position="1"/>
        <end position="373"/>
    </location>
</feature>
<feature type="active site" description="Nucleophile" evidence="1">
    <location>
        <position position="325"/>
    </location>
</feature>
<feature type="active site" description="Proton acceptor" evidence="1">
    <location>
        <position position="359"/>
    </location>
</feature>
<feature type="binding site" evidence="1">
    <location>
        <position position="190"/>
    </location>
    <ligand>
        <name>S-adenosyl-L-methionine</name>
        <dbReference type="ChEBI" id="CHEBI:59789"/>
    </ligand>
</feature>
<feature type="binding site" evidence="1">
    <location>
        <position position="219"/>
    </location>
    <ligand>
        <name>S-adenosyl-L-methionine</name>
        <dbReference type="ChEBI" id="CHEBI:59789"/>
    </ligand>
</feature>
<feature type="binding site" evidence="1">
    <location>
        <position position="224"/>
    </location>
    <ligand>
        <name>S-adenosyl-L-methionine</name>
        <dbReference type="ChEBI" id="CHEBI:59789"/>
    </ligand>
</feature>
<feature type="binding site" evidence="1">
    <location>
        <position position="240"/>
    </location>
    <ligand>
        <name>S-adenosyl-L-methionine</name>
        <dbReference type="ChEBI" id="CHEBI:59789"/>
    </ligand>
</feature>
<feature type="binding site" evidence="1">
    <location>
        <position position="300"/>
    </location>
    <ligand>
        <name>S-adenosyl-L-methionine</name>
        <dbReference type="ChEBI" id="CHEBI:59789"/>
    </ligand>
</feature>
<accession>Q1QXW4</accession>
<gene>
    <name evidence="1" type="primary">trmA</name>
    <name type="ordered locus">Csal_1339</name>
</gene>
<sequence>MAVPVVEPERYEAQLDAKRERVTAQFARFSPPALEVFPSPPSHYRQRCEFRLWHEGDDLFYAMFEVDPSDPKRKEVIRLDDYPVASERINALMPALREALLASDVLRRKLFQVEFLTTLSGEALVTLIYHRQLDAAWEQEARALQTTLGVSIIGRARKQRLVLDRDHVWERLQVEGREFVYQQVENSFTQPNAAICQSMLGWARDVTRESREGDLVEFYCGNGNFTVALAENFRRVVATEISRTSVASANVNLEANAVANAVVARMSAEEFSAALAGEKTGRRVAALALDEHTFTTALVDPPRAGLDAHSCEQLKVYERIVYISCNPDTLEANLEQLSATHVVTRFALFDQFPYTDHCECGVLLERRAPAARA</sequence>
<proteinExistence type="inferred from homology"/>
<reference key="1">
    <citation type="journal article" date="2011" name="Stand. Genomic Sci.">
        <title>Complete genome sequence of the halophilic and highly halotolerant Chromohalobacter salexigens type strain (1H11(T)).</title>
        <authorList>
            <person name="Copeland A."/>
            <person name="O'Connor K."/>
            <person name="Lucas S."/>
            <person name="Lapidus A."/>
            <person name="Berry K.W."/>
            <person name="Detter J.C."/>
            <person name="Del Rio T.G."/>
            <person name="Hammon N."/>
            <person name="Dalin E."/>
            <person name="Tice H."/>
            <person name="Pitluck S."/>
            <person name="Bruce D."/>
            <person name="Goodwin L."/>
            <person name="Han C."/>
            <person name="Tapia R."/>
            <person name="Saunders E."/>
            <person name="Schmutz J."/>
            <person name="Brettin T."/>
            <person name="Larimer F."/>
            <person name="Land M."/>
            <person name="Hauser L."/>
            <person name="Vargas C."/>
            <person name="Nieto J.J."/>
            <person name="Kyrpides N.C."/>
            <person name="Ivanova N."/>
            <person name="Goker M."/>
            <person name="Klenk H.P."/>
            <person name="Csonka L.N."/>
            <person name="Woyke T."/>
        </authorList>
    </citation>
    <scope>NUCLEOTIDE SEQUENCE [LARGE SCALE GENOMIC DNA]</scope>
    <source>
        <strain>ATCC BAA-138 / DSM 3043 / CIP 106854 / NCIMB 13768 / 1H11</strain>
    </source>
</reference>